<dbReference type="EMBL" id="CP001614">
    <property type="protein sequence ID" value="ACR14534.1"/>
    <property type="molecule type" value="Genomic_DNA"/>
</dbReference>
<dbReference type="RefSeq" id="WP_015820648.1">
    <property type="nucleotide sequence ID" value="NC_012997.1"/>
</dbReference>
<dbReference type="SMR" id="C5BTX7"/>
<dbReference type="STRING" id="377629.TERTU_1625"/>
<dbReference type="GeneID" id="58409302"/>
<dbReference type="GeneID" id="93857095"/>
<dbReference type="KEGG" id="ttu:TERTU_1625"/>
<dbReference type="eggNOG" id="COG1219">
    <property type="taxonomic scope" value="Bacteria"/>
</dbReference>
<dbReference type="HOGENOM" id="CLU_014218_8_2_6"/>
<dbReference type="OrthoDB" id="9804062at2"/>
<dbReference type="Proteomes" id="UP000009080">
    <property type="component" value="Chromosome"/>
</dbReference>
<dbReference type="GO" id="GO:0009376">
    <property type="term" value="C:HslUV protease complex"/>
    <property type="evidence" value="ECO:0007669"/>
    <property type="project" value="TreeGrafter"/>
</dbReference>
<dbReference type="GO" id="GO:0005524">
    <property type="term" value="F:ATP binding"/>
    <property type="evidence" value="ECO:0007669"/>
    <property type="project" value="UniProtKB-UniRule"/>
</dbReference>
<dbReference type="GO" id="GO:0016887">
    <property type="term" value="F:ATP hydrolysis activity"/>
    <property type="evidence" value="ECO:0007669"/>
    <property type="project" value="InterPro"/>
</dbReference>
<dbReference type="GO" id="GO:0140662">
    <property type="term" value="F:ATP-dependent protein folding chaperone"/>
    <property type="evidence" value="ECO:0007669"/>
    <property type="project" value="InterPro"/>
</dbReference>
<dbReference type="GO" id="GO:0046983">
    <property type="term" value="F:protein dimerization activity"/>
    <property type="evidence" value="ECO:0007669"/>
    <property type="project" value="InterPro"/>
</dbReference>
<dbReference type="GO" id="GO:0051082">
    <property type="term" value="F:unfolded protein binding"/>
    <property type="evidence" value="ECO:0007669"/>
    <property type="project" value="UniProtKB-UniRule"/>
</dbReference>
<dbReference type="GO" id="GO:0008270">
    <property type="term" value="F:zinc ion binding"/>
    <property type="evidence" value="ECO:0007669"/>
    <property type="project" value="InterPro"/>
</dbReference>
<dbReference type="GO" id="GO:0051301">
    <property type="term" value="P:cell division"/>
    <property type="evidence" value="ECO:0007669"/>
    <property type="project" value="TreeGrafter"/>
</dbReference>
<dbReference type="GO" id="GO:0051603">
    <property type="term" value="P:proteolysis involved in protein catabolic process"/>
    <property type="evidence" value="ECO:0007669"/>
    <property type="project" value="TreeGrafter"/>
</dbReference>
<dbReference type="CDD" id="cd19497">
    <property type="entry name" value="RecA-like_ClpX"/>
    <property type="match status" value="1"/>
</dbReference>
<dbReference type="FunFam" id="1.10.8.60:FF:000002">
    <property type="entry name" value="ATP-dependent Clp protease ATP-binding subunit ClpX"/>
    <property type="match status" value="1"/>
</dbReference>
<dbReference type="FunFam" id="3.40.50.300:FF:000005">
    <property type="entry name" value="ATP-dependent Clp protease ATP-binding subunit ClpX"/>
    <property type="match status" value="1"/>
</dbReference>
<dbReference type="Gene3D" id="1.10.8.60">
    <property type="match status" value="1"/>
</dbReference>
<dbReference type="Gene3D" id="6.20.220.10">
    <property type="entry name" value="ClpX chaperone, C4-type zinc finger domain"/>
    <property type="match status" value="1"/>
</dbReference>
<dbReference type="Gene3D" id="3.40.50.300">
    <property type="entry name" value="P-loop containing nucleotide triphosphate hydrolases"/>
    <property type="match status" value="1"/>
</dbReference>
<dbReference type="HAMAP" id="MF_00175">
    <property type="entry name" value="ClpX"/>
    <property type="match status" value="1"/>
</dbReference>
<dbReference type="InterPro" id="IPR003593">
    <property type="entry name" value="AAA+_ATPase"/>
</dbReference>
<dbReference type="InterPro" id="IPR050052">
    <property type="entry name" value="ATP-dep_Clp_protease_ClpX"/>
</dbReference>
<dbReference type="InterPro" id="IPR003959">
    <property type="entry name" value="ATPase_AAA_core"/>
</dbReference>
<dbReference type="InterPro" id="IPR019489">
    <property type="entry name" value="Clp_ATPase_C"/>
</dbReference>
<dbReference type="InterPro" id="IPR004487">
    <property type="entry name" value="Clp_protease_ATP-bd_su_ClpX"/>
</dbReference>
<dbReference type="InterPro" id="IPR046425">
    <property type="entry name" value="ClpX_bact"/>
</dbReference>
<dbReference type="InterPro" id="IPR027417">
    <property type="entry name" value="P-loop_NTPase"/>
</dbReference>
<dbReference type="InterPro" id="IPR010603">
    <property type="entry name" value="Znf_CppX_C4"/>
</dbReference>
<dbReference type="InterPro" id="IPR038366">
    <property type="entry name" value="Znf_CppX_C4_sf"/>
</dbReference>
<dbReference type="NCBIfam" id="TIGR00382">
    <property type="entry name" value="clpX"/>
    <property type="match status" value="1"/>
</dbReference>
<dbReference type="NCBIfam" id="NF003745">
    <property type="entry name" value="PRK05342.1"/>
    <property type="match status" value="1"/>
</dbReference>
<dbReference type="PANTHER" id="PTHR48102:SF7">
    <property type="entry name" value="ATP-DEPENDENT CLP PROTEASE ATP-BINDING SUBUNIT CLPX-LIKE, MITOCHONDRIAL"/>
    <property type="match status" value="1"/>
</dbReference>
<dbReference type="PANTHER" id="PTHR48102">
    <property type="entry name" value="ATP-DEPENDENT CLP PROTEASE ATP-BINDING SUBUNIT CLPX-LIKE, MITOCHONDRIAL-RELATED"/>
    <property type="match status" value="1"/>
</dbReference>
<dbReference type="Pfam" id="PF07724">
    <property type="entry name" value="AAA_2"/>
    <property type="match status" value="1"/>
</dbReference>
<dbReference type="Pfam" id="PF10431">
    <property type="entry name" value="ClpB_D2-small"/>
    <property type="match status" value="1"/>
</dbReference>
<dbReference type="Pfam" id="PF06689">
    <property type="entry name" value="zf-C4_ClpX"/>
    <property type="match status" value="1"/>
</dbReference>
<dbReference type="SMART" id="SM00382">
    <property type="entry name" value="AAA"/>
    <property type="match status" value="1"/>
</dbReference>
<dbReference type="SMART" id="SM01086">
    <property type="entry name" value="ClpB_D2-small"/>
    <property type="match status" value="1"/>
</dbReference>
<dbReference type="SMART" id="SM00994">
    <property type="entry name" value="zf-C4_ClpX"/>
    <property type="match status" value="1"/>
</dbReference>
<dbReference type="SUPFAM" id="SSF57716">
    <property type="entry name" value="Glucocorticoid receptor-like (DNA-binding domain)"/>
    <property type="match status" value="1"/>
</dbReference>
<dbReference type="SUPFAM" id="SSF52540">
    <property type="entry name" value="P-loop containing nucleoside triphosphate hydrolases"/>
    <property type="match status" value="1"/>
</dbReference>
<dbReference type="PROSITE" id="PS51902">
    <property type="entry name" value="CLPX_ZB"/>
    <property type="match status" value="1"/>
</dbReference>
<comment type="function">
    <text evidence="1">ATP-dependent specificity component of the Clp protease. It directs the protease to specific substrates. Can perform chaperone functions in the absence of ClpP.</text>
</comment>
<comment type="subunit">
    <text evidence="1">Component of the ClpX-ClpP complex. Forms a hexameric ring that, in the presence of ATP, binds to fourteen ClpP subunits assembled into a disk-like structure with a central cavity, resembling the structure of eukaryotic proteasomes.</text>
</comment>
<comment type="similarity">
    <text evidence="1">Belongs to the ClpX chaperone family.</text>
</comment>
<sequence>MSDNGNDNEDSGKLLYCSFCGKSQHEVRKLIAGPSVFICDECVDLCNDIIREEIQENTPEGNGDKLPVPIDISATLDEYVIGQQDAKKVLAVAVYNHYKRLRVGDKKKGKDEVELGKSNILLVGPTGSGKTLLAETLARLLNVPFTIADATTLTEAGYVGEDVENIIQKLLQKCDYDVEKAQQGIVYIDEIDKISRKSDNPSITRDVSGEGVQQALLKLIEGTIASVPPQGGRKHPQQEFLQVDTSNILFICGGAFAGLDKIIRDRSEKGGIGFSAEVKSKDGSKNVGETLKDLEPEDLVRYGLIPEFVGRLPVIATLDELDKEALVTILREPKNSLVKQYAKLFEMENVEVDFRADALEAVAEKAMVRKTGARGLRSIMENVLLDTMYKLPSEENVVKVVVDDSVIRGESAPLLVYGNSESAVAVPED</sequence>
<reference key="1">
    <citation type="journal article" date="2009" name="PLoS ONE">
        <title>The complete genome of Teredinibacter turnerae T7901: an intracellular endosymbiont of marine wood-boring bivalves (shipworms).</title>
        <authorList>
            <person name="Yang J.C."/>
            <person name="Madupu R."/>
            <person name="Durkin A.S."/>
            <person name="Ekborg N.A."/>
            <person name="Pedamallu C.S."/>
            <person name="Hostetler J.B."/>
            <person name="Radune D."/>
            <person name="Toms B.S."/>
            <person name="Henrissat B."/>
            <person name="Coutinho P.M."/>
            <person name="Schwarz S."/>
            <person name="Field L."/>
            <person name="Trindade-Silva A.E."/>
            <person name="Soares C.A.G."/>
            <person name="Elshahawi S."/>
            <person name="Hanora A."/>
            <person name="Schmidt E.W."/>
            <person name="Haygood M.G."/>
            <person name="Posfai J."/>
            <person name="Benner J."/>
            <person name="Madinger C."/>
            <person name="Nove J."/>
            <person name="Anton B."/>
            <person name="Chaudhary K."/>
            <person name="Foster J."/>
            <person name="Holman A."/>
            <person name="Kumar S."/>
            <person name="Lessard P.A."/>
            <person name="Luyten Y.A."/>
            <person name="Slatko B."/>
            <person name="Wood N."/>
            <person name="Wu B."/>
            <person name="Teplitski M."/>
            <person name="Mougous J.D."/>
            <person name="Ward N."/>
            <person name="Eisen J.A."/>
            <person name="Badger J.H."/>
            <person name="Distel D.L."/>
        </authorList>
    </citation>
    <scope>NUCLEOTIDE SEQUENCE [LARGE SCALE GENOMIC DNA]</scope>
    <source>
        <strain>ATCC 39867 / T7901</strain>
    </source>
</reference>
<keyword id="KW-0067">ATP-binding</keyword>
<keyword id="KW-0143">Chaperone</keyword>
<keyword id="KW-0479">Metal-binding</keyword>
<keyword id="KW-0547">Nucleotide-binding</keyword>
<keyword id="KW-1185">Reference proteome</keyword>
<keyword id="KW-0862">Zinc</keyword>
<proteinExistence type="inferred from homology"/>
<evidence type="ECO:0000255" key="1">
    <source>
        <dbReference type="HAMAP-Rule" id="MF_00175"/>
    </source>
</evidence>
<evidence type="ECO:0000255" key="2">
    <source>
        <dbReference type="PROSITE-ProRule" id="PRU01250"/>
    </source>
</evidence>
<protein>
    <recommendedName>
        <fullName evidence="1">ATP-dependent Clp protease ATP-binding subunit ClpX</fullName>
    </recommendedName>
</protein>
<accession>C5BTX7</accession>
<organism>
    <name type="scientific">Teredinibacter turnerae (strain ATCC 39867 / T7901)</name>
    <dbReference type="NCBI Taxonomy" id="377629"/>
    <lineage>
        <taxon>Bacteria</taxon>
        <taxon>Pseudomonadati</taxon>
        <taxon>Pseudomonadota</taxon>
        <taxon>Gammaproteobacteria</taxon>
        <taxon>Cellvibrionales</taxon>
        <taxon>Cellvibrionaceae</taxon>
        <taxon>Teredinibacter</taxon>
    </lineage>
</organism>
<gene>
    <name evidence="1" type="primary">clpX</name>
    <name type="ordered locus">TERTU_1625</name>
</gene>
<feature type="chain" id="PRO_1000203744" description="ATP-dependent Clp protease ATP-binding subunit ClpX">
    <location>
        <begin position="1"/>
        <end position="429"/>
    </location>
</feature>
<feature type="domain" description="ClpX-type ZB" evidence="2">
    <location>
        <begin position="5"/>
        <end position="58"/>
    </location>
</feature>
<feature type="binding site" evidence="2">
    <location>
        <position position="17"/>
    </location>
    <ligand>
        <name>Zn(2+)</name>
        <dbReference type="ChEBI" id="CHEBI:29105"/>
    </ligand>
</feature>
<feature type="binding site" evidence="2">
    <location>
        <position position="20"/>
    </location>
    <ligand>
        <name>Zn(2+)</name>
        <dbReference type="ChEBI" id="CHEBI:29105"/>
    </ligand>
</feature>
<feature type="binding site" evidence="2">
    <location>
        <position position="39"/>
    </location>
    <ligand>
        <name>Zn(2+)</name>
        <dbReference type="ChEBI" id="CHEBI:29105"/>
    </ligand>
</feature>
<feature type="binding site" evidence="2">
    <location>
        <position position="42"/>
    </location>
    <ligand>
        <name>Zn(2+)</name>
        <dbReference type="ChEBI" id="CHEBI:29105"/>
    </ligand>
</feature>
<feature type="binding site" evidence="1">
    <location>
        <begin position="125"/>
        <end position="132"/>
    </location>
    <ligand>
        <name>ATP</name>
        <dbReference type="ChEBI" id="CHEBI:30616"/>
    </ligand>
</feature>
<name>CLPX_TERTT</name>